<gene>
    <name type="primary">ykoG</name>
    <name type="ordered locus">BSU13250</name>
</gene>
<feature type="chain" id="PRO_0000081395" description="Uncharacterized transcriptional regulatory protein YkoG">
    <location>
        <begin position="1"/>
        <end position="228"/>
    </location>
</feature>
<feature type="domain" description="Response regulatory" evidence="1">
    <location>
        <begin position="5"/>
        <end position="119"/>
    </location>
</feature>
<feature type="DNA-binding region" description="OmpR/PhoB-type" evidence="2">
    <location>
        <begin position="130"/>
        <end position="228"/>
    </location>
</feature>
<feature type="modified residue" description="4-aspartylphosphate" evidence="1">
    <location>
        <position position="54"/>
    </location>
</feature>
<reference key="1">
    <citation type="submission" date="1997-11" db="EMBL/GenBank/DDBJ databases">
        <title>Sequence of the Bacillus subtilis genome between xlyA and ykoR.</title>
        <authorList>
            <person name="Devine K.M."/>
        </authorList>
    </citation>
    <scope>NUCLEOTIDE SEQUENCE [GENOMIC DNA]</scope>
    <source>
        <strain>168</strain>
    </source>
</reference>
<reference key="2">
    <citation type="journal article" date="1997" name="Nature">
        <title>The complete genome sequence of the Gram-positive bacterium Bacillus subtilis.</title>
        <authorList>
            <person name="Kunst F."/>
            <person name="Ogasawara N."/>
            <person name="Moszer I."/>
            <person name="Albertini A.M."/>
            <person name="Alloni G."/>
            <person name="Azevedo V."/>
            <person name="Bertero M.G."/>
            <person name="Bessieres P."/>
            <person name="Bolotin A."/>
            <person name="Borchert S."/>
            <person name="Borriss R."/>
            <person name="Boursier L."/>
            <person name="Brans A."/>
            <person name="Braun M."/>
            <person name="Brignell S.C."/>
            <person name="Bron S."/>
            <person name="Brouillet S."/>
            <person name="Bruschi C.V."/>
            <person name="Caldwell B."/>
            <person name="Capuano V."/>
            <person name="Carter N.M."/>
            <person name="Choi S.-K."/>
            <person name="Codani J.-J."/>
            <person name="Connerton I.F."/>
            <person name="Cummings N.J."/>
            <person name="Daniel R.A."/>
            <person name="Denizot F."/>
            <person name="Devine K.M."/>
            <person name="Duesterhoeft A."/>
            <person name="Ehrlich S.D."/>
            <person name="Emmerson P.T."/>
            <person name="Entian K.-D."/>
            <person name="Errington J."/>
            <person name="Fabret C."/>
            <person name="Ferrari E."/>
            <person name="Foulger D."/>
            <person name="Fritz C."/>
            <person name="Fujita M."/>
            <person name="Fujita Y."/>
            <person name="Fuma S."/>
            <person name="Galizzi A."/>
            <person name="Galleron N."/>
            <person name="Ghim S.-Y."/>
            <person name="Glaser P."/>
            <person name="Goffeau A."/>
            <person name="Golightly E.J."/>
            <person name="Grandi G."/>
            <person name="Guiseppi G."/>
            <person name="Guy B.J."/>
            <person name="Haga K."/>
            <person name="Haiech J."/>
            <person name="Harwood C.R."/>
            <person name="Henaut A."/>
            <person name="Hilbert H."/>
            <person name="Holsappel S."/>
            <person name="Hosono S."/>
            <person name="Hullo M.-F."/>
            <person name="Itaya M."/>
            <person name="Jones L.-M."/>
            <person name="Joris B."/>
            <person name="Karamata D."/>
            <person name="Kasahara Y."/>
            <person name="Klaerr-Blanchard M."/>
            <person name="Klein C."/>
            <person name="Kobayashi Y."/>
            <person name="Koetter P."/>
            <person name="Koningstein G."/>
            <person name="Krogh S."/>
            <person name="Kumano M."/>
            <person name="Kurita K."/>
            <person name="Lapidus A."/>
            <person name="Lardinois S."/>
            <person name="Lauber J."/>
            <person name="Lazarevic V."/>
            <person name="Lee S.-M."/>
            <person name="Levine A."/>
            <person name="Liu H."/>
            <person name="Masuda S."/>
            <person name="Mauel C."/>
            <person name="Medigue C."/>
            <person name="Medina N."/>
            <person name="Mellado R.P."/>
            <person name="Mizuno M."/>
            <person name="Moestl D."/>
            <person name="Nakai S."/>
            <person name="Noback M."/>
            <person name="Noone D."/>
            <person name="O'Reilly M."/>
            <person name="Ogawa K."/>
            <person name="Ogiwara A."/>
            <person name="Oudega B."/>
            <person name="Park S.-H."/>
            <person name="Parro V."/>
            <person name="Pohl T.M."/>
            <person name="Portetelle D."/>
            <person name="Porwollik S."/>
            <person name="Prescott A.M."/>
            <person name="Presecan E."/>
            <person name="Pujic P."/>
            <person name="Purnelle B."/>
            <person name="Rapoport G."/>
            <person name="Rey M."/>
            <person name="Reynolds S."/>
            <person name="Rieger M."/>
            <person name="Rivolta C."/>
            <person name="Rocha E."/>
            <person name="Roche B."/>
            <person name="Rose M."/>
            <person name="Sadaie Y."/>
            <person name="Sato T."/>
            <person name="Scanlan E."/>
            <person name="Schleich S."/>
            <person name="Schroeter R."/>
            <person name="Scoffone F."/>
            <person name="Sekiguchi J."/>
            <person name="Sekowska A."/>
            <person name="Seror S.J."/>
            <person name="Serror P."/>
            <person name="Shin B.-S."/>
            <person name="Soldo B."/>
            <person name="Sorokin A."/>
            <person name="Tacconi E."/>
            <person name="Takagi T."/>
            <person name="Takahashi H."/>
            <person name="Takemaru K."/>
            <person name="Takeuchi M."/>
            <person name="Tamakoshi A."/>
            <person name="Tanaka T."/>
            <person name="Terpstra P."/>
            <person name="Tognoni A."/>
            <person name="Tosato V."/>
            <person name="Uchiyama S."/>
            <person name="Vandenbol M."/>
            <person name="Vannier F."/>
            <person name="Vassarotti A."/>
            <person name="Viari A."/>
            <person name="Wambutt R."/>
            <person name="Wedler E."/>
            <person name="Wedler H."/>
            <person name="Weitzenegger T."/>
            <person name="Winters P."/>
            <person name="Wipat A."/>
            <person name="Yamamoto H."/>
            <person name="Yamane K."/>
            <person name="Yasumoto K."/>
            <person name="Yata K."/>
            <person name="Yoshida K."/>
            <person name="Yoshikawa H.-F."/>
            <person name="Zumstein E."/>
            <person name="Yoshikawa H."/>
            <person name="Danchin A."/>
        </authorList>
    </citation>
    <scope>NUCLEOTIDE SEQUENCE [LARGE SCALE GENOMIC DNA]</scope>
    <source>
        <strain>168</strain>
    </source>
</reference>
<reference key="3">
    <citation type="journal article" date="2001" name="J. Bacteriol.">
        <title>Comprehensive DNA microarray analysis of Bacillus subtilis two-component regulatory systems.</title>
        <authorList>
            <person name="Kobayashi K."/>
            <person name="Ogura M."/>
            <person name="Yamaguchi H."/>
            <person name="Yoshida K."/>
            <person name="Ogasawara N."/>
            <person name="Tanaka T."/>
            <person name="Fujita Y."/>
        </authorList>
    </citation>
    <scope>FUNCTION</scope>
</reference>
<accession>O34903</accession>
<comment type="function">
    <text evidence="3">Probable member of the two-component regulatory system YkoH/YkoG.</text>
</comment>
<comment type="subcellular location">
    <subcellularLocation>
        <location evidence="4">Cytoplasm</location>
    </subcellularLocation>
</comment>
<comment type="PTM">
    <text evidence="4">Phosphorylated by YkoH.</text>
</comment>
<organism>
    <name type="scientific">Bacillus subtilis (strain 168)</name>
    <dbReference type="NCBI Taxonomy" id="224308"/>
    <lineage>
        <taxon>Bacteria</taxon>
        <taxon>Bacillati</taxon>
        <taxon>Bacillota</taxon>
        <taxon>Bacilli</taxon>
        <taxon>Bacillales</taxon>
        <taxon>Bacillaceae</taxon>
        <taxon>Bacillus</taxon>
    </lineage>
</organism>
<evidence type="ECO:0000255" key="1">
    <source>
        <dbReference type="PROSITE-ProRule" id="PRU00169"/>
    </source>
</evidence>
<evidence type="ECO:0000255" key="2">
    <source>
        <dbReference type="PROSITE-ProRule" id="PRU01091"/>
    </source>
</evidence>
<evidence type="ECO:0000269" key="3">
    <source>
    </source>
</evidence>
<evidence type="ECO:0000305" key="4"/>
<sequence length="228" mass="26012">MEKGHILIVEDEEKIARVLQLELEYEGYSVTIKHNGTEGLDAAAEGGYSLVLLDVMLPGLSGLEVLRRLRKTDSQTPVILLTARDSIPDKVTGLDIGANDYVTKPFEIEELLARIRAALRQNGTKTEDIGTFLTYDDLRVNEKTREVRRGDKEVELTPREFDLLVYMLKHPQQVLTREQILSSVWGFDYIGDTNVVDVYIRYIRKKLDYPYEKQLIHTIRGVGYAIKG</sequence>
<name>YKOG_BACSU</name>
<dbReference type="EMBL" id="AJ002571">
    <property type="protein sequence ID" value="CAA05604.1"/>
    <property type="molecule type" value="Genomic_DNA"/>
</dbReference>
<dbReference type="EMBL" id="AL009126">
    <property type="protein sequence ID" value="CAB13182.1"/>
    <property type="molecule type" value="Genomic_DNA"/>
</dbReference>
<dbReference type="PIR" id="C69859">
    <property type="entry name" value="C69859"/>
</dbReference>
<dbReference type="RefSeq" id="NP_389208.1">
    <property type="nucleotide sequence ID" value="NC_000964.3"/>
</dbReference>
<dbReference type="RefSeq" id="WP_003232551.1">
    <property type="nucleotide sequence ID" value="NZ_OZ025638.1"/>
</dbReference>
<dbReference type="SMR" id="O34903"/>
<dbReference type="FunCoup" id="O34903">
    <property type="interactions" value="338"/>
</dbReference>
<dbReference type="STRING" id="224308.BSU13250"/>
<dbReference type="PaxDb" id="224308-BSU13250"/>
<dbReference type="EnsemblBacteria" id="CAB13182">
    <property type="protein sequence ID" value="CAB13182"/>
    <property type="gene ID" value="BSU_13250"/>
</dbReference>
<dbReference type="GeneID" id="936451"/>
<dbReference type="KEGG" id="bsu:BSU13250"/>
<dbReference type="PATRIC" id="fig|224308.179.peg.1439"/>
<dbReference type="eggNOG" id="COG0745">
    <property type="taxonomic scope" value="Bacteria"/>
</dbReference>
<dbReference type="InParanoid" id="O34903"/>
<dbReference type="OrthoDB" id="9790442at2"/>
<dbReference type="PhylomeDB" id="O34903"/>
<dbReference type="BioCyc" id="BSUB:BSU13250-MONOMER"/>
<dbReference type="Proteomes" id="UP000001570">
    <property type="component" value="Chromosome"/>
</dbReference>
<dbReference type="GO" id="GO:0005829">
    <property type="term" value="C:cytosol"/>
    <property type="evidence" value="ECO:0000318"/>
    <property type="project" value="GO_Central"/>
</dbReference>
<dbReference type="GO" id="GO:0032993">
    <property type="term" value="C:protein-DNA complex"/>
    <property type="evidence" value="ECO:0000318"/>
    <property type="project" value="GO_Central"/>
</dbReference>
<dbReference type="GO" id="GO:0000156">
    <property type="term" value="F:phosphorelay response regulator activity"/>
    <property type="evidence" value="ECO:0000318"/>
    <property type="project" value="GO_Central"/>
</dbReference>
<dbReference type="GO" id="GO:0000976">
    <property type="term" value="F:transcription cis-regulatory region binding"/>
    <property type="evidence" value="ECO:0000318"/>
    <property type="project" value="GO_Central"/>
</dbReference>
<dbReference type="GO" id="GO:0006355">
    <property type="term" value="P:regulation of DNA-templated transcription"/>
    <property type="evidence" value="ECO:0000318"/>
    <property type="project" value="GO_Central"/>
</dbReference>
<dbReference type="CDD" id="cd00383">
    <property type="entry name" value="trans_reg_C"/>
    <property type="match status" value="1"/>
</dbReference>
<dbReference type="FunFam" id="3.40.50.2300:FF:000001">
    <property type="entry name" value="DNA-binding response regulator PhoB"/>
    <property type="match status" value="1"/>
</dbReference>
<dbReference type="FunFam" id="1.10.10.10:FF:000005">
    <property type="entry name" value="Two-component system response regulator"/>
    <property type="match status" value="1"/>
</dbReference>
<dbReference type="Gene3D" id="3.40.50.2300">
    <property type="match status" value="1"/>
</dbReference>
<dbReference type="Gene3D" id="6.10.250.690">
    <property type="match status" value="1"/>
</dbReference>
<dbReference type="Gene3D" id="1.10.10.10">
    <property type="entry name" value="Winged helix-like DNA-binding domain superfamily/Winged helix DNA-binding domain"/>
    <property type="match status" value="1"/>
</dbReference>
<dbReference type="InterPro" id="IPR011006">
    <property type="entry name" value="CheY-like_superfamily"/>
</dbReference>
<dbReference type="InterPro" id="IPR001867">
    <property type="entry name" value="OmpR/PhoB-type_DNA-bd"/>
</dbReference>
<dbReference type="InterPro" id="IPR001789">
    <property type="entry name" value="Sig_transdc_resp-reg_receiver"/>
</dbReference>
<dbReference type="InterPro" id="IPR039420">
    <property type="entry name" value="WalR-like"/>
</dbReference>
<dbReference type="InterPro" id="IPR036388">
    <property type="entry name" value="WH-like_DNA-bd_sf"/>
</dbReference>
<dbReference type="PANTHER" id="PTHR48111">
    <property type="entry name" value="REGULATOR OF RPOS"/>
    <property type="match status" value="1"/>
</dbReference>
<dbReference type="PANTHER" id="PTHR48111:SF22">
    <property type="entry name" value="REGULATOR OF RPOS"/>
    <property type="match status" value="1"/>
</dbReference>
<dbReference type="Pfam" id="PF00072">
    <property type="entry name" value="Response_reg"/>
    <property type="match status" value="1"/>
</dbReference>
<dbReference type="Pfam" id="PF00486">
    <property type="entry name" value="Trans_reg_C"/>
    <property type="match status" value="1"/>
</dbReference>
<dbReference type="SMART" id="SM00448">
    <property type="entry name" value="REC"/>
    <property type="match status" value="1"/>
</dbReference>
<dbReference type="SMART" id="SM00862">
    <property type="entry name" value="Trans_reg_C"/>
    <property type="match status" value="1"/>
</dbReference>
<dbReference type="SUPFAM" id="SSF52172">
    <property type="entry name" value="CheY-like"/>
    <property type="match status" value="1"/>
</dbReference>
<dbReference type="PROSITE" id="PS51755">
    <property type="entry name" value="OMPR_PHOB"/>
    <property type="match status" value="1"/>
</dbReference>
<dbReference type="PROSITE" id="PS50110">
    <property type="entry name" value="RESPONSE_REGULATORY"/>
    <property type="match status" value="1"/>
</dbReference>
<proteinExistence type="inferred from homology"/>
<keyword id="KW-0963">Cytoplasm</keyword>
<keyword id="KW-0238">DNA-binding</keyword>
<keyword id="KW-0597">Phosphoprotein</keyword>
<keyword id="KW-1185">Reference proteome</keyword>
<keyword id="KW-0804">Transcription</keyword>
<keyword id="KW-0805">Transcription regulation</keyword>
<keyword id="KW-0902">Two-component regulatory system</keyword>
<protein>
    <recommendedName>
        <fullName>Uncharacterized transcriptional regulatory protein YkoG</fullName>
    </recommendedName>
</protein>